<gene>
    <name type="primary">AP1B1</name>
    <name type="synonym">ADTB1</name>
    <name type="synonym">BAM22</name>
    <name type="synonym">CLAPB2</name>
</gene>
<protein>
    <recommendedName>
        <fullName>AP-1 complex subunit beta-1</fullName>
    </recommendedName>
    <alternativeName>
        <fullName>Adaptor protein complex AP-1 subunit beta-1</fullName>
    </alternativeName>
    <alternativeName>
        <fullName>Adaptor-related protein complex 1 subunit beta-1</fullName>
    </alternativeName>
    <alternativeName>
        <fullName>Beta-1-adaptin</fullName>
    </alternativeName>
    <alternativeName>
        <fullName>Beta-adaptin 1</fullName>
    </alternativeName>
    <alternativeName>
        <fullName>Clathrin assembly protein complex 1 beta large chain</fullName>
    </alternativeName>
    <alternativeName>
        <fullName>Golgi adaptor HA1/AP1 adaptin beta subunit</fullName>
    </alternativeName>
</protein>
<organism>
    <name type="scientific">Homo sapiens</name>
    <name type="common">Human</name>
    <dbReference type="NCBI Taxonomy" id="9606"/>
    <lineage>
        <taxon>Eukaryota</taxon>
        <taxon>Metazoa</taxon>
        <taxon>Chordata</taxon>
        <taxon>Craniata</taxon>
        <taxon>Vertebrata</taxon>
        <taxon>Euteleostomi</taxon>
        <taxon>Mammalia</taxon>
        <taxon>Eutheria</taxon>
        <taxon>Euarchontoglires</taxon>
        <taxon>Primates</taxon>
        <taxon>Haplorrhini</taxon>
        <taxon>Catarrhini</taxon>
        <taxon>Hominidae</taxon>
        <taxon>Homo</taxon>
    </lineage>
</organism>
<sequence>MTDSKYFTTTKKGEIFELKAELNSDKKEKKKEAVKKVIASMTVGKDVSALFPDVVNCMQTDNLELKKLVYLYLMNYAKSQPDMAIMAVNTFVKDCEDPNPLIRALAVRTMGCIRVDKITEYLCEPLRKCLKDEDPYVRKTAAVCVAKLHDINAQLVEDQGFLDTLKDLISDSNPMVVANAVAALSEIAESHPSSNLLDLNPQSINKLLTALNECTEWGQIFILDCLANYMPKDDREAQSICERVTPRLSHANSAVVLSAVKVLMKFMEMLSKDLDYYGTLLKKLAPPLVTLLSAEPELQYVALRNINLIVQKRPEILKHEMKVFFVKYNDPIYVKLEKLDIMIRLASQANIAQVLAELKEYATEVDVDFVRKAVRAIGRCAIKVEQSAERCVSTLLDLIQTKVNYVVQEAIVVIKDIFRKYPNKYESVIATLCENLDSLDEPEARAAMIWIVGEYAERIDNADELLESFLEGFHDESTQVQLQLLTAIVKLFLKKPTETQELVQQVLSLATQDSDNPDLRDRGYIYWRLLSTDPVAAKEVVLAEKPLISEETDLIEPTLLDELICYIGTLASVYHKPPSAFVEGGRGVVHKSLPPRTASSESAESPETAPTGAPPGEQPDVIPAQGDLLGDLLNLDLGPPVSGPPLATSSVQMGAVDLLGGGLDSLMGDEPEGIGGTNFVAPPTAAVPANLGAPIGSGLSDLFDLTSGVGTLSGSYVAPKAVWLPAMKAKGLEISGTFTRQVGSISMDLQLTNKALQVMTDFAIQFNRNSFGLAPAAPLQVHAPLSPNQTVEISLPLSTVGSVMKMEPLNNLQVAVKNNIDVFYFSTLYPLHILFVEDGKMDRQMFLATWKDIPNENEAQFQIRDCPLNAEAASSKLQSSNIFTVAKRNVEGQDMLYQSLKLTNGIWVLAELRIQPGNPSCTDLELSLKCRAPEVSQHVYQAYETILKN</sequence>
<dbReference type="EMBL" id="L13939">
    <property type="protein sequence ID" value="AAC98702.1"/>
    <property type="molecule type" value="mRNA"/>
</dbReference>
<dbReference type="EMBL" id="CT841508">
    <property type="protein sequence ID" value="CAJ86438.1"/>
    <property type="molecule type" value="mRNA"/>
</dbReference>
<dbReference type="EMBL" id="AC000041">
    <property type="status" value="NOT_ANNOTATED_CDS"/>
    <property type="molecule type" value="Genomic_DNA"/>
</dbReference>
<dbReference type="EMBL" id="AC002059">
    <property type="status" value="NOT_ANNOTATED_CDS"/>
    <property type="molecule type" value="Genomic_DNA"/>
</dbReference>
<dbReference type="EMBL" id="BC046242">
    <property type="protein sequence ID" value="AAH46242.1"/>
    <property type="molecule type" value="mRNA"/>
</dbReference>
<dbReference type="EMBL" id="U36268">
    <property type="protein sequence ID" value="AAC50684.2"/>
    <property type="molecule type" value="Genomic_DNA"/>
</dbReference>
<dbReference type="EMBL" id="U36250">
    <property type="protein sequence ID" value="AAC50684.2"/>
    <property type="status" value="JOINED"/>
    <property type="molecule type" value="Genomic_DNA"/>
</dbReference>
<dbReference type="EMBL" id="U36251">
    <property type="protein sequence ID" value="AAC50684.2"/>
    <property type="status" value="JOINED"/>
    <property type="molecule type" value="Genomic_DNA"/>
</dbReference>
<dbReference type="EMBL" id="U36252">
    <property type="protein sequence ID" value="AAC50684.2"/>
    <property type="status" value="JOINED"/>
    <property type="molecule type" value="Genomic_DNA"/>
</dbReference>
<dbReference type="EMBL" id="U36253">
    <property type="protein sequence ID" value="AAC50684.2"/>
    <property type="status" value="JOINED"/>
    <property type="molecule type" value="Genomic_DNA"/>
</dbReference>
<dbReference type="EMBL" id="U36254">
    <property type="protein sequence ID" value="AAC50684.2"/>
    <property type="status" value="JOINED"/>
    <property type="molecule type" value="Genomic_DNA"/>
</dbReference>
<dbReference type="EMBL" id="U36255">
    <property type="protein sequence ID" value="AAC50684.2"/>
    <property type="status" value="JOINED"/>
    <property type="molecule type" value="Genomic_DNA"/>
</dbReference>
<dbReference type="EMBL" id="U36256">
    <property type="protein sequence ID" value="AAC50684.2"/>
    <property type="status" value="JOINED"/>
    <property type="molecule type" value="Genomic_DNA"/>
</dbReference>
<dbReference type="EMBL" id="U36257">
    <property type="protein sequence ID" value="AAC50684.2"/>
    <property type="status" value="JOINED"/>
    <property type="molecule type" value="Genomic_DNA"/>
</dbReference>
<dbReference type="EMBL" id="U36258">
    <property type="protein sequence ID" value="AAC50684.2"/>
    <property type="status" value="JOINED"/>
    <property type="molecule type" value="Genomic_DNA"/>
</dbReference>
<dbReference type="EMBL" id="U36259">
    <property type="protein sequence ID" value="AAC50684.2"/>
    <property type="status" value="JOINED"/>
    <property type="molecule type" value="Genomic_DNA"/>
</dbReference>
<dbReference type="EMBL" id="U36260">
    <property type="protein sequence ID" value="AAC50684.2"/>
    <property type="status" value="JOINED"/>
    <property type="molecule type" value="Genomic_DNA"/>
</dbReference>
<dbReference type="EMBL" id="U36261">
    <property type="protein sequence ID" value="AAC50684.2"/>
    <property type="status" value="JOINED"/>
    <property type="molecule type" value="Genomic_DNA"/>
</dbReference>
<dbReference type="EMBL" id="U36262">
    <property type="protein sequence ID" value="AAC50684.2"/>
    <property type="status" value="JOINED"/>
    <property type="molecule type" value="Genomic_DNA"/>
</dbReference>
<dbReference type="EMBL" id="U36263">
    <property type="protein sequence ID" value="AAC50684.2"/>
    <property type="status" value="JOINED"/>
    <property type="molecule type" value="Genomic_DNA"/>
</dbReference>
<dbReference type="EMBL" id="U36264">
    <property type="protein sequence ID" value="AAC50684.2"/>
    <property type="status" value="JOINED"/>
    <property type="molecule type" value="Genomic_DNA"/>
</dbReference>
<dbReference type="EMBL" id="U36265">
    <property type="protein sequence ID" value="AAC50684.2"/>
    <property type="status" value="JOINED"/>
    <property type="molecule type" value="Genomic_DNA"/>
</dbReference>
<dbReference type="EMBL" id="U36266">
    <property type="protein sequence ID" value="AAC50684.2"/>
    <property type="status" value="JOINED"/>
    <property type="molecule type" value="Genomic_DNA"/>
</dbReference>
<dbReference type="EMBL" id="U36267">
    <property type="protein sequence ID" value="AAC50684.2"/>
    <property type="status" value="JOINED"/>
    <property type="molecule type" value="Genomic_DNA"/>
</dbReference>
<dbReference type="EMBL" id="AF379038">
    <property type="protein sequence ID" value="AAC50684.2"/>
    <property type="status" value="JOINED"/>
    <property type="molecule type" value="Genomic_DNA"/>
</dbReference>
<dbReference type="EMBL" id="AF379039">
    <property type="protein sequence ID" value="AAC50684.2"/>
    <property type="status" value="JOINED"/>
    <property type="molecule type" value="Genomic_DNA"/>
</dbReference>
<dbReference type="EMBL" id="L48038">
    <property type="status" value="NOT_ANNOTATED_CDS"/>
    <property type="molecule type" value="Genomic_DNA"/>
</dbReference>
<dbReference type="CCDS" id="CCDS13855.1">
    <molecule id="Q10567-1"/>
</dbReference>
<dbReference type="CCDS" id="CCDS13856.2">
    <molecule id="Q10567-3"/>
</dbReference>
<dbReference type="CCDS" id="CCDS54515.1">
    <molecule id="Q10567-4"/>
</dbReference>
<dbReference type="PIR" id="I54360">
    <property type="entry name" value="I54360"/>
</dbReference>
<dbReference type="RefSeq" id="NP_001118.3">
    <molecule id="Q10567-1"/>
    <property type="nucleotide sequence ID" value="NM_001127.3"/>
</dbReference>
<dbReference type="RefSeq" id="NP_001159491.1">
    <molecule id="Q10567-4"/>
    <property type="nucleotide sequence ID" value="NM_001166019.2"/>
</dbReference>
<dbReference type="RefSeq" id="NP_001365492.1">
    <molecule id="Q10567-2"/>
    <property type="nucleotide sequence ID" value="NM_001378563.1"/>
</dbReference>
<dbReference type="RefSeq" id="NP_663782.2">
    <molecule id="Q10567-3"/>
    <property type="nucleotide sequence ID" value="NM_145730.3"/>
</dbReference>
<dbReference type="PDB" id="4HMY">
    <property type="method" value="X-ray"/>
    <property type="resolution" value="7.00 A"/>
    <property type="chains" value="B=1-584"/>
</dbReference>
<dbReference type="PDB" id="4P6Z">
    <property type="method" value="X-ray"/>
    <property type="resolution" value="3.00 A"/>
    <property type="chains" value="B=1-584"/>
</dbReference>
<dbReference type="PDB" id="6CM9">
    <property type="method" value="EM"/>
    <property type="resolution" value="3.73 A"/>
    <property type="chains" value="B=1-584"/>
</dbReference>
<dbReference type="PDB" id="6CRI">
    <property type="method" value="EM"/>
    <property type="resolution" value="6.80 A"/>
    <property type="chains" value="B/I/J=14-583"/>
</dbReference>
<dbReference type="PDB" id="6D83">
    <property type="method" value="EM"/>
    <property type="resolution" value="4.27 A"/>
    <property type="chains" value="B=1-584"/>
</dbReference>
<dbReference type="PDB" id="6D84">
    <property type="method" value="EM"/>
    <property type="resolution" value="6.72 A"/>
    <property type="chains" value="B/F=1-584"/>
</dbReference>
<dbReference type="PDB" id="6DFF">
    <property type="method" value="EM"/>
    <property type="resolution" value="3.90 A"/>
    <property type="chains" value="B=1-584"/>
</dbReference>
<dbReference type="PDB" id="7R4H">
    <property type="method" value="EM"/>
    <property type="resolution" value="2.34 A"/>
    <property type="chains" value="B=1-584"/>
</dbReference>
<dbReference type="PDB" id="7UX3">
    <property type="method" value="EM"/>
    <property type="resolution" value="9.60 A"/>
    <property type="chains" value="B=2-949"/>
</dbReference>
<dbReference type="PDB" id="8D4C">
    <property type="method" value="EM"/>
    <property type="resolution" value="9.30 A"/>
    <property type="chains" value="A/B=2-949"/>
</dbReference>
<dbReference type="PDB" id="8D4D">
    <property type="method" value="EM"/>
    <property type="resolution" value="9.60 A"/>
    <property type="chains" value="A/B=1-949"/>
</dbReference>
<dbReference type="PDB" id="8D4E">
    <property type="method" value="EM"/>
    <property type="resolution" value="9.20 A"/>
    <property type="chains" value="B=1-949"/>
</dbReference>
<dbReference type="PDB" id="8D4F">
    <property type="method" value="EM"/>
    <property type="resolution" value="9.80 A"/>
    <property type="chains" value="A/B=1-949"/>
</dbReference>
<dbReference type="PDB" id="8D4G">
    <property type="method" value="EM"/>
    <property type="resolution" value="11.60 A"/>
    <property type="chains" value="A/B=1-949"/>
</dbReference>
<dbReference type="PDB" id="8D9R">
    <property type="method" value="EM"/>
    <property type="resolution" value="20.00 A"/>
    <property type="chains" value="A/B/D/E/F/I=1-949"/>
</dbReference>
<dbReference type="PDB" id="8D9S">
    <property type="method" value="EM"/>
    <property type="resolution" value="20.00 A"/>
    <property type="chains" value="A/B/D/E/F/I=1-949"/>
</dbReference>
<dbReference type="PDB" id="8D9T">
    <property type="method" value="EM"/>
    <property type="resolution" value="20.00 A"/>
    <property type="chains" value="A/B/D/E/F/I=1-949"/>
</dbReference>
<dbReference type="PDB" id="8D9U">
    <property type="method" value="EM"/>
    <property type="resolution" value="20.00 A"/>
    <property type="chains" value="A/B/D/E/F/I=1-949"/>
</dbReference>
<dbReference type="PDB" id="8D9V">
    <property type="method" value="EM"/>
    <property type="resolution" value="9.40 A"/>
    <property type="chains" value="A/B=1-949"/>
</dbReference>
<dbReference type="PDB" id="8D9W">
    <property type="method" value="EM"/>
    <property type="resolution" value="9.30 A"/>
    <property type="chains" value="A/B/D/E=1-949"/>
</dbReference>
<dbReference type="PDBsum" id="4HMY"/>
<dbReference type="PDBsum" id="4P6Z"/>
<dbReference type="PDBsum" id="6CM9"/>
<dbReference type="PDBsum" id="6CRI"/>
<dbReference type="PDBsum" id="6D83"/>
<dbReference type="PDBsum" id="6D84"/>
<dbReference type="PDBsum" id="6DFF"/>
<dbReference type="PDBsum" id="7R4H"/>
<dbReference type="PDBsum" id="7UX3"/>
<dbReference type="PDBsum" id="8D4C"/>
<dbReference type="PDBsum" id="8D4D"/>
<dbReference type="PDBsum" id="8D4E"/>
<dbReference type="PDBsum" id="8D4F"/>
<dbReference type="PDBsum" id="8D4G"/>
<dbReference type="PDBsum" id="8D9R"/>
<dbReference type="PDBsum" id="8D9S"/>
<dbReference type="PDBsum" id="8D9T"/>
<dbReference type="PDBsum" id="8D9U"/>
<dbReference type="PDBsum" id="8D9V"/>
<dbReference type="PDBsum" id="8D9W"/>
<dbReference type="EMDB" id="EMD-14312"/>
<dbReference type="EMDB" id="EMD-14525"/>
<dbReference type="EMDB" id="EMD-14526"/>
<dbReference type="EMDB" id="EMD-26853"/>
<dbReference type="EMDB" id="EMD-27181"/>
<dbReference type="EMDB" id="EMD-27182"/>
<dbReference type="EMDB" id="EMD-27183"/>
<dbReference type="EMDB" id="EMD-27184"/>
<dbReference type="EMDB" id="EMD-27185"/>
<dbReference type="EMDB" id="EMD-7563"/>
<dbReference type="SMR" id="Q10567"/>
<dbReference type="BioGRID" id="106671">
    <property type="interactions" value="259"/>
</dbReference>
<dbReference type="ComplexPortal" id="CPX-5047">
    <property type="entry name" value="Ubiquitous AP-1 Adaptor complex, sigma1a variant"/>
</dbReference>
<dbReference type="ComplexPortal" id="CPX-5048">
    <property type="entry name" value="Ubiquitous AP-1 Adaptor complex, sigma1b variant"/>
</dbReference>
<dbReference type="ComplexPortal" id="CPX-5049">
    <property type="entry name" value="Ubiquitous AP-1 Adaptor complex, sigma1c variant"/>
</dbReference>
<dbReference type="ComplexPortal" id="CPX-5050">
    <property type="entry name" value="Endothelial AP-1 Adaptor complex, sigma1a variant"/>
</dbReference>
<dbReference type="CORUM" id="Q10567"/>
<dbReference type="DIP" id="DIP-24207N"/>
<dbReference type="ELM" id="Q10567"/>
<dbReference type="FunCoup" id="Q10567">
    <property type="interactions" value="2376"/>
</dbReference>
<dbReference type="IntAct" id="Q10567">
    <property type="interactions" value="138"/>
</dbReference>
<dbReference type="MINT" id="Q10567"/>
<dbReference type="STRING" id="9606.ENSP00000350199"/>
<dbReference type="BindingDB" id="Q10567"/>
<dbReference type="ChEMBL" id="CHEMBL4630824"/>
<dbReference type="TCDB" id="9.B.278.1.1">
    <property type="family name" value="the organellar-targeting adaptor protein complex (o-apc) family"/>
</dbReference>
<dbReference type="GlyGen" id="Q10567">
    <property type="glycosylation" value="1 site, 1 O-linked glycan (1 site)"/>
</dbReference>
<dbReference type="iPTMnet" id="Q10567"/>
<dbReference type="MetOSite" id="Q10567"/>
<dbReference type="PhosphoSitePlus" id="Q10567"/>
<dbReference type="SwissPalm" id="Q10567"/>
<dbReference type="BioMuta" id="AP1B1"/>
<dbReference type="DMDM" id="290457628"/>
<dbReference type="CPTAC" id="CPTAC-1596"/>
<dbReference type="jPOST" id="Q10567"/>
<dbReference type="MassIVE" id="Q10567"/>
<dbReference type="PaxDb" id="9606-ENSP00000350199"/>
<dbReference type="PeptideAtlas" id="Q10567"/>
<dbReference type="ProteomicsDB" id="31533"/>
<dbReference type="ProteomicsDB" id="58857">
    <molecule id="Q10567-1"/>
</dbReference>
<dbReference type="ProteomicsDB" id="58858">
    <molecule id="Q10567-2"/>
</dbReference>
<dbReference type="ProteomicsDB" id="58859">
    <molecule id="Q10567-3"/>
</dbReference>
<dbReference type="Pumba" id="Q10567"/>
<dbReference type="Antibodypedia" id="10350">
    <property type="antibodies" value="107 antibodies from 25 providers"/>
</dbReference>
<dbReference type="DNASU" id="162"/>
<dbReference type="Ensembl" id="ENST00000317368.11">
    <molecule id="Q10567-4"/>
    <property type="protein sequence ID" value="ENSP00000319361.7"/>
    <property type="gene ID" value="ENSG00000100280.17"/>
</dbReference>
<dbReference type="Ensembl" id="ENST00000357586.7">
    <molecule id="Q10567-1"/>
    <property type="protein sequence ID" value="ENSP00000350199.2"/>
    <property type="gene ID" value="ENSG00000100280.17"/>
</dbReference>
<dbReference type="Ensembl" id="ENST00000405198.6">
    <molecule id="Q10567-3"/>
    <property type="protein sequence ID" value="ENSP00000384194.2"/>
    <property type="gene ID" value="ENSG00000100280.17"/>
</dbReference>
<dbReference type="Ensembl" id="ENST00000432560.6">
    <molecule id="Q10567-3"/>
    <property type="protein sequence ID" value="ENSP00000400065.2"/>
    <property type="gene ID" value="ENSG00000100280.17"/>
</dbReference>
<dbReference type="GeneID" id="162"/>
<dbReference type="KEGG" id="hsa:162"/>
<dbReference type="MANE-Select" id="ENST00000357586.7">
    <property type="protein sequence ID" value="ENSP00000350199.2"/>
    <property type="RefSeq nucleotide sequence ID" value="NM_001127.4"/>
    <property type="RefSeq protein sequence ID" value="NP_001118.3"/>
</dbReference>
<dbReference type="UCSC" id="uc003afi.4">
    <molecule id="Q10567-1"/>
    <property type="organism name" value="human"/>
</dbReference>
<dbReference type="AGR" id="HGNC:554"/>
<dbReference type="CTD" id="162"/>
<dbReference type="DisGeNET" id="162"/>
<dbReference type="GeneCards" id="AP1B1"/>
<dbReference type="GeneReviews" id="AP1B1"/>
<dbReference type="HGNC" id="HGNC:554">
    <property type="gene designation" value="AP1B1"/>
</dbReference>
<dbReference type="HPA" id="ENSG00000100280">
    <property type="expression patterns" value="Low tissue specificity"/>
</dbReference>
<dbReference type="MalaCards" id="AP1B1"/>
<dbReference type="MIM" id="242150">
    <property type="type" value="phenotype"/>
</dbReference>
<dbReference type="MIM" id="600157">
    <property type="type" value="gene"/>
</dbReference>
<dbReference type="neXtProt" id="NX_Q10567"/>
<dbReference type="OpenTargets" id="ENSG00000100280"/>
<dbReference type="Orphanet" id="171851">
    <property type="disease" value="MEDNIK syndrome"/>
</dbReference>
<dbReference type="PharmGKB" id="PA24844"/>
<dbReference type="VEuPathDB" id="HostDB:ENSG00000100280"/>
<dbReference type="eggNOG" id="KOG1061">
    <property type="taxonomic scope" value="Eukaryota"/>
</dbReference>
<dbReference type="GeneTree" id="ENSGT00940000155991"/>
<dbReference type="HOGENOM" id="CLU_006320_1_1_1"/>
<dbReference type="InParanoid" id="Q10567"/>
<dbReference type="OMA" id="QPDKALM"/>
<dbReference type="OrthoDB" id="10254310at2759"/>
<dbReference type="PAN-GO" id="Q10567">
    <property type="GO annotations" value="1 GO annotation based on evolutionary models"/>
</dbReference>
<dbReference type="PhylomeDB" id="Q10567"/>
<dbReference type="TreeFam" id="TF300318"/>
<dbReference type="PathwayCommons" id="Q10567"/>
<dbReference type="Reactome" id="R-HSA-164940">
    <property type="pathway name" value="Nef mediated downregulation of MHC class I complex cell surface expression"/>
</dbReference>
<dbReference type="Reactome" id="R-HSA-2132295">
    <property type="pathway name" value="MHC class II antigen presentation"/>
</dbReference>
<dbReference type="Reactome" id="R-HSA-432720">
    <property type="pathway name" value="Lysosome Vesicle Biogenesis"/>
</dbReference>
<dbReference type="Reactome" id="R-HSA-432722">
    <property type="pathway name" value="Golgi Associated Vesicle Biogenesis"/>
</dbReference>
<dbReference type="SignaLink" id="Q10567"/>
<dbReference type="SIGNOR" id="Q10567"/>
<dbReference type="BioGRID-ORCS" id="162">
    <property type="hits" value="26 hits in 1152 CRISPR screens"/>
</dbReference>
<dbReference type="CD-CODE" id="91857CE7">
    <property type="entry name" value="Nucleolus"/>
</dbReference>
<dbReference type="CD-CODE" id="FB4E32DD">
    <property type="entry name" value="Presynaptic clusters and postsynaptic densities"/>
</dbReference>
<dbReference type="ChiTaRS" id="AP1B1">
    <property type="organism name" value="human"/>
</dbReference>
<dbReference type="EvolutionaryTrace" id="Q10567"/>
<dbReference type="GeneWiki" id="AP1B1"/>
<dbReference type="GenomeRNAi" id="162"/>
<dbReference type="Pharos" id="Q10567">
    <property type="development level" value="Tbio"/>
</dbReference>
<dbReference type="PRO" id="PR:Q10567"/>
<dbReference type="Proteomes" id="UP000005640">
    <property type="component" value="Chromosome 22"/>
</dbReference>
<dbReference type="RNAct" id="Q10567">
    <property type="molecule type" value="protein"/>
</dbReference>
<dbReference type="Bgee" id="ENSG00000100280">
    <property type="expression patterns" value="Expressed in endometrium epithelium and 203 other cell types or tissues"/>
</dbReference>
<dbReference type="ExpressionAtlas" id="Q10567">
    <property type="expression patterns" value="baseline and differential"/>
</dbReference>
<dbReference type="GO" id="GO:0030121">
    <property type="term" value="C:AP-1 adaptor complex"/>
    <property type="evidence" value="ECO:0000303"/>
    <property type="project" value="ComplexPortal"/>
</dbReference>
<dbReference type="GO" id="GO:0030659">
    <property type="term" value="C:cytoplasmic vesicle membrane"/>
    <property type="evidence" value="ECO:0000304"/>
    <property type="project" value="Reactome"/>
</dbReference>
<dbReference type="GO" id="GO:0005829">
    <property type="term" value="C:cytosol"/>
    <property type="evidence" value="ECO:0000314"/>
    <property type="project" value="HPA"/>
</dbReference>
<dbReference type="GO" id="GO:0005769">
    <property type="term" value="C:early endosome"/>
    <property type="evidence" value="ECO:0000303"/>
    <property type="project" value="ComplexPortal"/>
</dbReference>
<dbReference type="GO" id="GO:0005794">
    <property type="term" value="C:Golgi apparatus"/>
    <property type="evidence" value="ECO:0000314"/>
    <property type="project" value="HPA"/>
</dbReference>
<dbReference type="GO" id="GO:0000139">
    <property type="term" value="C:Golgi membrane"/>
    <property type="evidence" value="ECO:0000304"/>
    <property type="project" value="Reactome"/>
</dbReference>
<dbReference type="GO" id="GO:0043231">
    <property type="term" value="C:intracellular membrane-bounded organelle"/>
    <property type="evidence" value="ECO:0000314"/>
    <property type="project" value="HPA"/>
</dbReference>
<dbReference type="GO" id="GO:0005765">
    <property type="term" value="C:lysosomal membrane"/>
    <property type="evidence" value="ECO:0000304"/>
    <property type="project" value="Reactome"/>
</dbReference>
<dbReference type="GO" id="GO:0008021">
    <property type="term" value="C:synaptic vesicle"/>
    <property type="evidence" value="ECO:0007669"/>
    <property type="project" value="Ensembl"/>
</dbReference>
<dbReference type="GO" id="GO:0032588">
    <property type="term" value="C:trans-Golgi network membrane"/>
    <property type="evidence" value="ECO:0000304"/>
    <property type="project" value="Reactome"/>
</dbReference>
<dbReference type="GO" id="GO:0030276">
    <property type="term" value="F:clathrin binding"/>
    <property type="evidence" value="ECO:0007669"/>
    <property type="project" value="InterPro"/>
</dbReference>
<dbReference type="GO" id="GO:0019901">
    <property type="term" value="F:protein kinase binding"/>
    <property type="evidence" value="ECO:0000250"/>
    <property type="project" value="ParkinsonsUK-UCL"/>
</dbReference>
<dbReference type="GO" id="GO:0110010">
    <property type="term" value="P:basolateral protein secretion"/>
    <property type="evidence" value="ECO:0000303"/>
    <property type="project" value="ComplexPortal"/>
</dbReference>
<dbReference type="GO" id="GO:0007368">
    <property type="term" value="P:determination of left/right symmetry"/>
    <property type="evidence" value="ECO:0007669"/>
    <property type="project" value="Ensembl"/>
</dbReference>
<dbReference type="GO" id="GO:0007507">
    <property type="term" value="P:heart development"/>
    <property type="evidence" value="ECO:0007669"/>
    <property type="project" value="Ensembl"/>
</dbReference>
<dbReference type="GO" id="GO:0006886">
    <property type="term" value="P:intracellular protein transport"/>
    <property type="evidence" value="ECO:0007669"/>
    <property type="project" value="InterPro"/>
</dbReference>
<dbReference type="GO" id="GO:0001822">
    <property type="term" value="P:kidney development"/>
    <property type="evidence" value="ECO:0007669"/>
    <property type="project" value="Ensembl"/>
</dbReference>
<dbReference type="GO" id="GO:1903232">
    <property type="term" value="P:melanosome assembly"/>
    <property type="evidence" value="ECO:0000303"/>
    <property type="project" value="ComplexPortal"/>
</dbReference>
<dbReference type="GO" id="GO:0060155">
    <property type="term" value="P:platelet dense granule organization"/>
    <property type="evidence" value="ECO:0000303"/>
    <property type="project" value="ComplexPortal"/>
</dbReference>
<dbReference type="GO" id="GO:0016192">
    <property type="term" value="P:vesicle-mediated transport"/>
    <property type="evidence" value="ECO:0000303"/>
    <property type="project" value="ComplexPortal"/>
</dbReference>
<dbReference type="FunFam" id="1.25.10.10:FF:000002">
    <property type="entry name" value="AP complex subunit beta"/>
    <property type="match status" value="1"/>
</dbReference>
<dbReference type="FunFam" id="2.60.40.1150:FF:000001">
    <property type="entry name" value="AP complex subunit beta"/>
    <property type="match status" value="1"/>
</dbReference>
<dbReference type="FunFam" id="3.30.310.10:FF:000003">
    <property type="entry name" value="AP complex subunit beta"/>
    <property type="match status" value="1"/>
</dbReference>
<dbReference type="Gene3D" id="2.60.40.1150">
    <property type="match status" value="1"/>
</dbReference>
<dbReference type="Gene3D" id="1.25.10.10">
    <property type="entry name" value="Leucine-rich Repeat Variant"/>
    <property type="match status" value="1"/>
</dbReference>
<dbReference type="Gene3D" id="3.30.310.10">
    <property type="entry name" value="TATA-Binding Protein"/>
    <property type="match status" value="1"/>
</dbReference>
<dbReference type="InterPro" id="IPR026739">
    <property type="entry name" value="AP_beta"/>
</dbReference>
<dbReference type="InterPro" id="IPR016342">
    <property type="entry name" value="AP_complex_bsu_1_2_4"/>
</dbReference>
<dbReference type="InterPro" id="IPR011989">
    <property type="entry name" value="ARM-like"/>
</dbReference>
<dbReference type="InterPro" id="IPR016024">
    <property type="entry name" value="ARM-type_fold"/>
</dbReference>
<dbReference type="InterPro" id="IPR000225">
    <property type="entry name" value="Armadillo"/>
</dbReference>
<dbReference type="InterPro" id="IPR015151">
    <property type="entry name" value="B-adaptin_app_sub_C"/>
</dbReference>
<dbReference type="InterPro" id="IPR002553">
    <property type="entry name" value="Clathrin/coatomer_adapt-like_N"/>
</dbReference>
<dbReference type="InterPro" id="IPR008152">
    <property type="entry name" value="Clathrin_a/b/g-adaptin_app_Ig"/>
</dbReference>
<dbReference type="InterPro" id="IPR013041">
    <property type="entry name" value="Clathrin_app_Ig-like_sf"/>
</dbReference>
<dbReference type="InterPro" id="IPR013037">
    <property type="entry name" value="Clathrin_b-adaptin_app_Ig-like"/>
</dbReference>
<dbReference type="InterPro" id="IPR009028">
    <property type="entry name" value="Coatomer/calthrin_app_sub_C"/>
</dbReference>
<dbReference type="InterPro" id="IPR012295">
    <property type="entry name" value="TBP_dom_sf"/>
</dbReference>
<dbReference type="PANTHER" id="PTHR11134">
    <property type="entry name" value="ADAPTOR COMPLEX SUBUNIT BETA FAMILY MEMBER"/>
    <property type="match status" value="1"/>
</dbReference>
<dbReference type="Pfam" id="PF01602">
    <property type="entry name" value="Adaptin_N"/>
    <property type="match status" value="1"/>
</dbReference>
<dbReference type="Pfam" id="PF02883">
    <property type="entry name" value="Alpha_adaptinC2"/>
    <property type="match status" value="1"/>
</dbReference>
<dbReference type="Pfam" id="PF09066">
    <property type="entry name" value="B2-adapt-app_C"/>
    <property type="match status" value="1"/>
</dbReference>
<dbReference type="PIRSF" id="PIRSF002291">
    <property type="entry name" value="AP_complex_beta"/>
    <property type="match status" value="1"/>
</dbReference>
<dbReference type="SMART" id="SM00809">
    <property type="entry name" value="Alpha_adaptinC2"/>
    <property type="match status" value="1"/>
</dbReference>
<dbReference type="SMART" id="SM00185">
    <property type="entry name" value="ARM"/>
    <property type="match status" value="2"/>
</dbReference>
<dbReference type="SMART" id="SM01020">
    <property type="entry name" value="B2-adapt-app_C"/>
    <property type="match status" value="1"/>
</dbReference>
<dbReference type="SUPFAM" id="SSF48371">
    <property type="entry name" value="ARM repeat"/>
    <property type="match status" value="1"/>
</dbReference>
<dbReference type="SUPFAM" id="SSF49348">
    <property type="entry name" value="Clathrin adaptor appendage domain"/>
    <property type="match status" value="1"/>
</dbReference>
<dbReference type="SUPFAM" id="SSF55711">
    <property type="entry name" value="Subdomain of clathrin and coatomer appendage domain"/>
    <property type="match status" value="1"/>
</dbReference>
<name>AP1B1_HUMAN</name>
<reference key="1">
    <citation type="journal article" date="1994" name="Hum. Mol. Genet.">
        <title>Characterization of a new member of the human beta-adaptin gene family from chromosome 22q12, a candidate meningioma gene.</title>
        <authorList>
            <person name="Peyrard M."/>
            <person name="Fransson I."/>
            <person name="Xie Y.-G."/>
            <person name="Han F.-Y."/>
            <person name="Ruttledge M.H."/>
            <person name="Swahn S."/>
            <person name="Collins J.E."/>
            <person name="Dunham I."/>
            <person name="Collins V.P."/>
            <person name="Dumanski J.P."/>
        </authorList>
    </citation>
    <scope>NUCLEOTIDE SEQUENCE [MRNA] (ISOFORMS A AND B)</scope>
    <source>
        <tissue>Brain</tissue>
    </source>
</reference>
<reference key="2">
    <citation type="journal article" date="2004" name="Genome Biol.">
        <title>A genome annotation-driven approach to cloning the human ORFeome.</title>
        <authorList>
            <person name="Collins J.E."/>
            <person name="Wright C.L."/>
            <person name="Edwards C.A."/>
            <person name="Davis M.P."/>
            <person name="Grinham J.A."/>
            <person name="Cole C.G."/>
            <person name="Goward M.E."/>
            <person name="Aguado B."/>
            <person name="Mallya M."/>
            <person name="Mokrab Y."/>
            <person name="Huckle E.J."/>
            <person name="Beare D.M."/>
            <person name="Dunham I."/>
        </authorList>
    </citation>
    <scope>NUCLEOTIDE SEQUENCE [LARGE SCALE MRNA] (ISOFORM C)</scope>
</reference>
<reference key="3">
    <citation type="journal article" date="1999" name="Nature">
        <title>The DNA sequence of human chromosome 22.</title>
        <authorList>
            <person name="Dunham I."/>
            <person name="Hunt A.R."/>
            <person name="Collins J.E."/>
            <person name="Bruskiewich R."/>
            <person name="Beare D.M."/>
            <person name="Clamp M."/>
            <person name="Smink L.J."/>
            <person name="Ainscough R."/>
            <person name="Almeida J.P."/>
            <person name="Babbage A.K."/>
            <person name="Bagguley C."/>
            <person name="Bailey J."/>
            <person name="Barlow K.F."/>
            <person name="Bates K.N."/>
            <person name="Beasley O.P."/>
            <person name="Bird C.P."/>
            <person name="Blakey S.E."/>
            <person name="Bridgeman A.M."/>
            <person name="Buck D."/>
            <person name="Burgess J."/>
            <person name="Burrill W.D."/>
            <person name="Burton J."/>
            <person name="Carder C."/>
            <person name="Carter N.P."/>
            <person name="Chen Y."/>
            <person name="Clark G."/>
            <person name="Clegg S.M."/>
            <person name="Cobley V.E."/>
            <person name="Cole C.G."/>
            <person name="Collier R.E."/>
            <person name="Connor R."/>
            <person name="Conroy D."/>
            <person name="Corby N.R."/>
            <person name="Coville G.J."/>
            <person name="Cox A.V."/>
            <person name="Davis J."/>
            <person name="Dawson E."/>
            <person name="Dhami P.D."/>
            <person name="Dockree C."/>
            <person name="Dodsworth S.J."/>
            <person name="Durbin R.M."/>
            <person name="Ellington A.G."/>
            <person name="Evans K.L."/>
            <person name="Fey J.M."/>
            <person name="Fleming K."/>
            <person name="French L."/>
            <person name="Garner A.A."/>
            <person name="Gilbert J.G.R."/>
            <person name="Goward M.E."/>
            <person name="Grafham D.V."/>
            <person name="Griffiths M.N.D."/>
            <person name="Hall C."/>
            <person name="Hall R.E."/>
            <person name="Hall-Tamlyn G."/>
            <person name="Heathcott R.W."/>
            <person name="Ho S."/>
            <person name="Holmes S."/>
            <person name="Hunt S.E."/>
            <person name="Jones M.C."/>
            <person name="Kershaw J."/>
            <person name="Kimberley A.M."/>
            <person name="King A."/>
            <person name="Laird G.K."/>
            <person name="Langford C.F."/>
            <person name="Leversha M.A."/>
            <person name="Lloyd C."/>
            <person name="Lloyd D.M."/>
            <person name="Martyn I.D."/>
            <person name="Mashreghi-Mohammadi M."/>
            <person name="Matthews L.H."/>
            <person name="Mccann O.T."/>
            <person name="Mcclay J."/>
            <person name="Mclaren S."/>
            <person name="McMurray A.A."/>
            <person name="Milne S.A."/>
            <person name="Mortimore B.J."/>
            <person name="Odell C.N."/>
            <person name="Pavitt R."/>
            <person name="Pearce A.V."/>
            <person name="Pearson D."/>
            <person name="Phillimore B.J.C.T."/>
            <person name="Phillips S.H."/>
            <person name="Plumb R.W."/>
            <person name="Ramsay H."/>
            <person name="Ramsey Y."/>
            <person name="Rogers L."/>
            <person name="Ross M.T."/>
            <person name="Scott C.E."/>
            <person name="Sehra H.K."/>
            <person name="Skuce C.D."/>
            <person name="Smalley S."/>
            <person name="Smith M.L."/>
            <person name="Soderlund C."/>
            <person name="Spragon L."/>
            <person name="Steward C.A."/>
            <person name="Sulston J.E."/>
            <person name="Swann R.M."/>
            <person name="Vaudin M."/>
            <person name="Wall M."/>
            <person name="Wallis J.M."/>
            <person name="Whiteley M.N."/>
            <person name="Willey D.L."/>
            <person name="Williams L."/>
            <person name="Williams S.A."/>
            <person name="Williamson H."/>
            <person name="Wilmer T.E."/>
            <person name="Wilming L."/>
            <person name="Wright C.L."/>
            <person name="Hubbard T."/>
            <person name="Bentley D.R."/>
            <person name="Beck S."/>
            <person name="Rogers J."/>
            <person name="Shimizu N."/>
            <person name="Minoshima S."/>
            <person name="Kawasaki K."/>
            <person name="Sasaki T."/>
            <person name="Asakawa S."/>
            <person name="Kudoh J."/>
            <person name="Shintani A."/>
            <person name="Shibuya K."/>
            <person name="Yoshizaki Y."/>
            <person name="Aoki N."/>
            <person name="Mitsuyama S."/>
            <person name="Roe B.A."/>
            <person name="Chen F."/>
            <person name="Chu L."/>
            <person name="Crabtree J."/>
            <person name="Deschamps S."/>
            <person name="Do A."/>
            <person name="Do T."/>
            <person name="Dorman A."/>
            <person name="Fang F."/>
            <person name="Fu Y."/>
            <person name="Hu P."/>
            <person name="Hua A."/>
            <person name="Kenton S."/>
            <person name="Lai H."/>
            <person name="Lao H.I."/>
            <person name="Lewis J."/>
            <person name="Lewis S."/>
            <person name="Lin S.-P."/>
            <person name="Loh P."/>
            <person name="Malaj E."/>
            <person name="Nguyen T."/>
            <person name="Pan H."/>
            <person name="Phan S."/>
            <person name="Qi S."/>
            <person name="Qian Y."/>
            <person name="Ray L."/>
            <person name="Ren Q."/>
            <person name="Shaull S."/>
            <person name="Sloan D."/>
            <person name="Song L."/>
            <person name="Wang Q."/>
            <person name="Wang Y."/>
            <person name="Wang Z."/>
            <person name="White J."/>
            <person name="Willingham D."/>
            <person name="Wu H."/>
            <person name="Yao Z."/>
            <person name="Zhan M."/>
            <person name="Zhang G."/>
            <person name="Chissoe S."/>
            <person name="Murray J."/>
            <person name="Miller N."/>
            <person name="Minx P."/>
            <person name="Fulton R."/>
            <person name="Johnson D."/>
            <person name="Bemis G."/>
            <person name="Bentley D."/>
            <person name="Bradshaw H."/>
            <person name="Bourne S."/>
            <person name="Cordes M."/>
            <person name="Du Z."/>
            <person name="Fulton L."/>
            <person name="Goela D."/>
            <person name="Graves T."/>
            <person name="Hawkins J."/>
            <person name="Hinds K."/>
            <person name="Kemp K."/>
            <person name="Latreille P."/>
            <person name="Layman D."/>
            <person name="Ozersky P."/>
            <person name="Rohlfing T."/>
            <person name="Scheet P."/>
            <person name="Walker C."/>
            <person name="Wamsley A."/>
            <person name="Wohldmann P."/>
            <person name="Pepin K."/>
            <person name="Nelson J."/>
            <person name="Korf I."/>
            <person name="Bedell J.A."/>
            <person name="Hillier L.W."/>
            <person name="Mardis E."/>
            <person name="Waterston R."/>
            <person name="Wilson R."/>
            <person name="Emanuel B.S."/>
            <person name="Shaikh T."/>
            <person name="Kurahashi H."/>
            <person name="Saitta S."/>
            <person name="Budarf M.L."/>
            <person name="McDermid H.E."/>
            <person name="Johnson A."/>
            <person name="Wong A.C.C."/>
            <person name="Morrow B.E."/>
            <person name="Edelmann L."/>
            <person name="Kim U.J."/>
            <person name="Shizuya H."/>
            <person name="Simon M.I."/>
            <person name="Dumanski J.P."/>
            <person name="Peyrard M."/>
            <person name="Kedra D."/>
            <person name="Seroussi E."/>
            <person name="Fransson I."/>
            <person name="Tapia I."/>
            <person name="Bruder C.E."/>
            <person name="O'Brien K.P."/>
            <person name="Wilkinson P."/>
            <person name="Bodenteich A."/>
            <person name="Hartman K."/>
            <person name="Hu X."/>
            <person name="Khan A.S."/>
            <person name="Lane L."/>
            <person name="Tilahun Y."/>
            <person name="Wright H."/>
        </authorList>
    </citation>
    <scope>NUCLEOTIDE SEQUENCE [LARGE SCALE GENOMIC DNA]</scope>
</reference>
<reference key="4">
    <citation type="journal article" date="2004" name="Genome Res.">
        <title>The status, quality, and expansion of the NIH full-length cDNA project: the Mammalian Gene Collection (MGC).</title>
        <authorList>
            <consortium name="The MGC Project Team"/>
        </authorList>
    </citation>
    <scope>NUCLEOTIDE SEQUENCE [LARGE SCALE MRNA] (ISOFORM 4)</scope>
    <source>
        <tissue>Lymph</tissue>
    </source>
</reference>
<reference key="5">
    <citation type="journal article" date="1996" name="Genomics">
        <title>Structure of the promoter and genomic organization of the human beta'-adaptin gene (BAM22) from chromosome 22q12.</title>
        <authorList>
            <person name="Peyrard M."/>
            <person name="Pan H.-Q."/>
            <person name="Kedra D."/>
            <person name="Fransson I."/>
            <person name="Swahn S."/>
            <person name="Hartman K."/>
            <person name="Clifton S.W."/>
            <person name="Roe B.A."/>
            <person name="Dumanski J.P."/>
        </authorList>
    </citation>
    <scope>NUCLEOTIDE SEQUENCE [GENOMIC DNA]</scope>
</reference>
<reference key="6">
    <citation type="journal article" date="2009" name="Science">
        <title>Lysine acetylation targets protein complexes and co-regulates major cellular functions.</title>
        <authorList>
            <person name="Choudhary C."/>
            <person name="Kumar C."/>
            <person name="Gnad F."/>
            <person name="Nielsen M.L."/>
            <person name="Rehman M."/>
            <person name="Walther T.C."/>
            <person name="Olsen J.V."/>
            <person name="Mann M."/>
        </authorList>
    </citation>
    <scope>ACETYLATION [LARGE SCALE ANALYSIS] AT LYS-318</scope>
    <scope>IDENTIFICATION BY MASS SPECTROMETRY [LARGE SCALE ANALYSIS]</scope>
</reference>
<reference key="7">
    <citation type="journal article" date="2011" name="BMC Syst. Biol.">
        <title>Initial characterization of the human central proteome.</title>
        <authorList>
            <person name="Burkard T.R."/>
            <person name="Planyavsky M."/>
            <person name="Kaupe I."/>
            <person name="Breitwieser F.P."/>
            <person name="Buerckstuemmer T."/>
            <person name="Bennett K.L."/>
            <person name="Superti-Furga G."/>
            <person name="Colinge J."/>
        </authorList>
    </citation>
    <scope>IDENTIFICATION BY MASS SPECTROMETRY [LARGE SCALE ANALYSIS]</scope>
</reference>
<reference key="8">
    <citation type="journal article" date="2014" name="J. Proteomics">
        <title>An enzyme assisted RP-RPLC approach for in-depth analysis of human liver phosphoproteome.</title>
        <authorList>
            <person name="Bian Y."/>
            <person name="Song C."/>
            <person name="Cheng K."/>
            <person name="Dong M."/>
            <person name="Wang F."/>
            <person name="Huang J."/>
            <person name="Sun D."/>
            <person name="Wang L."/>
            <person name="Ye M."/>
            <person name="Zou H."/>
        </authorList>
    </citation>
    <scope>IDENTIFICATION BY MASS SPECTROMETRY [LARGE SCALE ANALYSIS]</scope>
    <source>
        <tissue>Liver</tissue>
    </source>
</reference>
<reference key="9">
    <citation type="journal article" date="2015" name="Proteomics">
        <title>N-terminome analysis of the human mitochondrial proteome.</title>
        <authorList>
            <person name="Vaca Jacome A.S."/>
            <person name="Rabilloud T."/>
            <person name="Schaeffer-Reiss C."/>
            <person name="Rompais M."/>
            <person name="Ayoub D."/>
            <person name="Lane L."/>
            <person name="Bairoch A."/>
            <person name="Van Dorsselaer A."/>
            <person name="Carapito C."/>
        </authorList>
    </citation>
    <scope>IDENTIFICATION BY MASS SPECTROMETRY [LARGE SCALE ANALYSIS]</scope>
</reference>
<reference key="10">
    <citation type="journal article" date="2019" name="Am. J. Hum. Genet.">
        <title>Homozygous loss-of-function mutations in AP1B1, encoding beta-1 subunit of adaptor-related protein complex 1, cause MEDNIK-like syndrome.</title>
        <authorList>
            <person name="Alsaif H.S."/>
            <person name="Al-Owain M."/>
            <person name="Barrios-Llerena M.E."/>
            <person name="Gosadi G."/>
            <person name="Binamer Y."/>
            <person name="Devadason D."/>
            <person name="Ravenscroft J."/>
            <person name="Suri M."/>
            <person name="Alkuraya F.S."/>
        </authorList>
    </citation>
    <scope>FUNCTION</scope>
    <scope>INVOLVEMENT IN KIDAR</scope>
</reference>
<reference key="11">
    <citation type="journal article" date="2019" name="Am. J. Hum. Genet.">
        <title>Recessive mutations in AP1B1 cause ichthyosis, deafness, and photophobia.</title>
        <authorList>
            <person name="Boyden L.M."/>
            <person name="Atzmony L."/>
            <person name="Hamilton C."/>
            <person name="Zhou J."/>
            <person name="Lim Y.H."/>
            <person name="Hu R."/>
            <person name="Pappas J."/>
            <person name="Rabin R."/>
            <person name="Ekstien J."/>
            <person name="Hirsch Y."/>
            <person name="Prendiville J."/>
            <person name="Lifton R.P."/>
            <person name="Ferguson S."/>
            <person name="Choate K.A."/>
        </authorList>
    </citation>
    <scope>INVOLVEMENT IN KIDAR</scope>
    <scope>VARIANTS KIDAR ARG-144 AND 792-GLU--ASN-949 DEL</scope>
    <scope>CHARACTERIZATION OF VARIANT KIDAR 792-GLU--ASN-949 DEL</scope>
</reference>
<keyword id="KW-0002">3D-structure</keyword>
<keyword id="KW-0007">Acetylation</keyword>
<keyword id="KW-0025">Alternative splicing</keyword>
<keyword id="KW-0968">Cytoplasmic vesicle</keyword>
<keyword id="KW-0209">Deafness</keyword>
<keyword id="KW-0225">Disease variant</keyword>
<keyword id="KW-0333">Golgi apparatus</keyword>
<keyword id="KW-0977">Ichthyosis</keyword>
<keyword id="KW-0472">Membrane</keyword>
<keyword id="KW-0944">Nitration</keyword>
<keyword id="KW-0653">Protein transport</keyword>
<keyword id="KW-1267">Proteomics identification</keyword>
<keyword id="KW-1185">Reference proteome</keyword>
<keyword id="KW-0813">Transport</keyword>
<proteinExistence type="evidence at protein level"/>
<comment type="function">
    <text evidence="4">Subunit of clathrin-associated adaptor protein complex 1 that plays a role in protein sorting in the late-Golgi/trans-Golgi network (TGN) and/or endosomes (PubMed:31630791). The AP complexes mediate both the recruitment of clathrin to membranes and the recognition of sorting signals within the cytosolic tails of transmembrane cargo molecules.</text>
</comment>
<comment type="subunit">
    <text>Adaptor protein complex 1 (AP-1) is a heterotetramer composed of two large adaptins (gamma-type subunit AP1G1 and beta-type subunit AP1B1), a medium adaptin (mu-type subunit AP1M1 or AP1M2) and a small adaptin (sigma-type subunit AP1S1 or AP1S2 or AP1S3).</text>
</comment>
<comment type="interaction">
    <interactant intactId="EBI-1171303">
        <id>Q10567</id>
    </interactant>
    <interactant intactId="EBI-297353">
        <id>P00533</id>
        <label>EGFR</label>
    </interactant>
    <organismsDiffer>false</organismsDiffer>
    <experiments>4</experiments>
</comment>
<comment type="interaction">
    <interactant intactId="EBI-1171303">
        <id>Q10567</id>
    </interactant>
    <interactant intactId="EBI-1040251">
        <id>P35585</id>
        <label>Ap1m1</label>
    </interactant>
    <organismsDiffer>true</organismsDiffer>
    <experiments>5</experiments>
</comment>
<comment type="interaction">
    <interactant intactId="EBI-11978055">
        <id>Q10567-3</id>
    </interactant>
    <interactant intactId="EBI-3925742">
        <id>Q8TD06</id>
        <label>AGR3</label>
    </interactant>
    <organismsDiffer>false</organismsDiffer>
    <experiments>3</experiments>
</comment>
<comment type="interaction">
    <interactant intactId="EBI-11978055">
        <id>Q10567-3</id>
    </interactant>
    <interactant intactId="EBI-7519424">
        <id>P53674</id>
        <label>CRYBB1</label>
    </interactant>
    <organismsDiffer>false</organismsDiffer>
    <experiments>3</experiments>
</comment>
<comment type="interaction">
    <interactant intactId="EBI-11978055">
        <id>Q10567-3</id>
    </interactant>
    <interactant intactId="EBI-2513774">
        <id>O95363</id>
        <label>FARS2</label>
    </interactant>
    <organismsDiffer>false</organismsDiffer>
    <experiments>3</experiments>
</comment>
<comment type="interaction">
    <interactant intactId="EBI-11978055">
        <id>Q10567-3</id>
    </interactant>
    <interactant intactId="EBI-744935">
        <id>Q9BVV2</id>
        <label>FNDC11</label>
    </interactant>
    <organismsDiffer>false</organismsDiffer>
    <experiments>3</experiments>
</comment>
<comment type="interaction">
    <interactant intactId="EBI-11978055">
        <id>Q10567-3</id>
    </interactant>
    <interactant intactId="EBI-751540">
        <id>O95872</id>
        <label>GPANK1</label>
    </interactant>
    <organismsDiffer>false</organismsDiffer>
    <experiments>3</experiments>
</comment>
<comment type="interaction">
    <interactant intactId="EBI-11978055">
        <id>Q10567-3</id>
    </interactant>
    <interactant intactId="EBI-12033200">
        <id>P78347-2</id>
        <label>GTF2I</label>
    </interactant>
    <organismsDiffer>false</organismsDiffer>
    <experiments>3</experiments>
</comment>
<comment type="interaction">
    <interactant intactId="EBI-11978055">
        <id>Q10567-3</id>
    </interactant>
    <interactant intactId="EBI-12216695">
        <id>Q9H1H9-2</id>
        <label>KIF13A</label>
    </interactant>
    <organismsDiffer>false</organismsDiffer>
    <experiments>3</experiments>
</comment>
<comment type="interaction">
    <interactant intactId="EBI-11978055">
        <id>Q10567-3</id>
    </interactant>
    <interactant intactId="EBI-747813">
        <id>Q5SW96</id>
        <label>LDLRAP1</label>
    </interactant>
    <organismsDiffer>false</organismsDiffer>
    <experiments>3</experiments>
</comment>
<comment type="interaction">
    <interactant intactId="EBI-11978055">
        <id>Q10567-3</id>
    </interactant>
    <interactant intactId="EBI-744248">
        <id>P40692</id>
        <label>MLH1</label>
    </interactant>
    <organismsDiffer>false</organismsDiffer>
    <experiments>3</experiments>
</comment>
<comment type="interaction">
    <interactant intactId="EBI-11978055">
        <id>Q10567-3</id>
    </interactant>
    <interactant intactId="EBI-11991020">
        <id>A6NI15</id>
        <label>MSGN1</label>
    </interactant>
    <organismsDiffer>false</organismsDiffer>
    <experiments>3</experiments>
</comment>
<comment type="interaction">
    <interactant intactId="EBI-11978055">
        <id>Q10567-3</id>
    </interactant>
    <interactant intactId="EBI-709754">
        <id>Q9HB07</id>
        <label>MYG1</label>
    </interactant>
    <organismsDiffer>false</organismsDiffer>
    <experiments>3</experiments>
</comment>
<comment type="interaction">
    <interactant intactId="EBI-11978055">
        <id>Q10567-3</id>
    </interactant>
    <interactant intactId="EBI-2609792">
        <id>Q8NC96</id>
        <label>NECAP1</label>
    </interactant>
    <organismsDiffer>false</organismsDiffer>
    <experiments>3</experiments>
</comment>
<comment type="interaction">
    <interactant intactId="EBI-11978055">
        <id>Q10567-3</id>
    </interactant>
    <interactant intactId="EBI-741048">
        <id>Q7Z3B4</id>
        <label>NUP54</label>
    </interactant>
    <organismsDiffer>false</organismsDiffer>
    <experiments>3</experiments>
</comment>
<comment type="interaction">
    <interactant intactId="EBI-11978055">
        <id>Q10567-3</id>
    </interactant>
    <interactant intactId="EBI-11956563">
        <id>Q96HA1-2</id>
        <label>POM121</label>
    </interactant>
    <organismsDiffer>false</organismsDiffer>
    <experiments>3</experiments>
</comment>
<comment type="interaction">
    <interactant intactId="EBI-11978055">
        <id>Q10567-3</id>
    </interactant>
    <interactant intactId="EBI-11974061">
        <id>Q9UIG4</id>
        <label>PSORS1C2</label>
    </interactant>
    <organismsDiffer>false</organismsDiffer>
    <experiments>3</experiments>
</comment>
<comment type="interaction">
    <interactant intactId="EBI-11978055">
        <id>Q10567-3</id>
    </interactant>
    <interactant intactId="EBI-12235180">
        <id>Q9H2S5</id>
        <label>RNF39</label>
    </interactant>
    <organismsDiffer>false</organismsDiffer>
    <experiments>3</experiments>
</comment>
<comment type="interaction">
    <interactant intactId="EBI-11978055">
        <id>Q10567-3</id>
    </interactant>
    <interactant intactId="EBI-8787464">
        <id>Q9NU19</id>
        <label>TBC1D22B</label>
    </interactant>
    <organismsDiffer>false</organismsDiffer>
    <experiments>3</experiments>
</comment>
<comment type="interaction">
    <interactant intactId="EBI-11978055">
        <id>Q10567-3</id>
    </interactant>
    <interactant intactId="EBI-10241197">
        <id>Q3SY00</id>
        <label>TSGA10IP</label>
    </interactant>
    <organismsDiffer>false</organismsDiffer>
    <experiments>3</experiments>
</comment>
<comment type="interaction">
    <interactant intactId="EBI-11978055">
        <id>Q10567-3</id>
    </interactant>
    <interactant intactId="EBI-632461">
        <id>Q01081</id>
        <label>U2AF1</label>
    </interactant>
    <organismsDiffer>false</organismsDiffer>
    <experiments>3</experiments>
</comment>
<comment type="interaction">
    <interactant intactId="EBI-11978055">
        <id>Q10567-3</id>
    </interactant>
    <interactant intactId="EBI-10255097">
        <id>Q6ZN96</id>
    </interactant>
    <organismsDiffer>false</organismsDiffer>
    <experiments>3</experiments>
</comment>
<comment type="interaction">
    <interactant intactId="EBI-11978055">
        <id>Q10567-3</id>
    </interactant>
    <interactant intactId="EBI-10259496">
        <id>Q86V28</id>
    </interactant>
    <organismsDiffer>false</organismsDiffer>
    <experiments>3</experiments>
</comment>
<comment type="subcellular location">
    <subcellularLocation>
        <location>Golgi apparatus</location>
    </subcellularLocation>
    <subcellularLocation>
        <location>Cytoplasmic vesicle</location>
        <location>Clathrin-coated vesicle membrane</location>
        <topology>Peripheral membrane protein</topology>
        <orientation>Cytoplasmic side</orientation>
    </subcellularLocation>
    <text>Component of the coat surrounding the cytoplasmic face of coated vesicles located at the Golgi complex.</text>
</comment>
<comment type="alternative products">
    <event type="alternative splicing"/>
    <isoform>
        <id>Q10567-1</id>
        <name>A</name>
        <sequence type="displayed"/>
    </isoform>
    <isoform>
        <id>Q10567-2</id>
        <name>B</name>
        <sequence type="described" ref="VSP_000163"/>
    </isoform>
    <isoform>
        <id>Q10567-3</id>
        <name>C</name>
        <sequence type="described" ref="VSP_000163 VSP_038753"/>
    </isoform>
    <isoform>
        <id>Q10567-4</id>
        <name>4</name>
        <sequence type="described" ref="VSP_000163 VSP_044928 VSP_038753"/>
    </isoform>
    <text>Additional isoforms seem to exist.</text>
</comment>
<comment type="tissue specificity">
    <text>Widely expressed.</text>
</comment>
<comment type="disease" evidence="3 4">
    <disease id="DI-05746">
        <name>Keratitis-ichthyosis-deafness syndrome, autosomal recessive</name>
        <acronym>KIDAR</acronym>
        <description>An autosomal recessive form of keratitis-ichthyosis-deafness syndrome, a disease characterized by the association of hyperkeratotic skin lesions with vascularizing keratitis and profound sensorineural hearing loss. KIDAR patients manifest ichthyosis, failure to thrive and developmental delay in childhood, thrombocytopenia, photophobia, and progressive hearing loss. Low plasma copper and ceruloplasmin levels have been reported in some patients.</description>
        <dbReference type="MIM" id="242150"/>
    </disease>
    <text>The disease is caused by variants affecting the gene represented in this entry.</text>
</comment>
<comment type="similarity">
    <text evidence="8">Belongs to the adaptor complexes large subunit family.</text>
</comment>
<accession>Q10567</accession>
<accession>C9JRD1</accession>
<accession>F8WDL0</accession>
<accession>P78436</accession>
<accession>Q20WL3</accession>
<accession>Q86X54</accession>
<feature type="chain" id="PRO_0000193738" description="AP-1 complex subunit beta-1">
    <location>
        <begin position="1"/>
        <end position="949"/>
    </location>
</feature>
<feature type="region of interest" description="Disordered" evidence="2">
    <location>
        <begin position="584"/>
        <end position="625"/>
    </location>
</feature>
<feature type="compositionally biased region" description="Low complexity" evidence="2">
    <location>
        <begin position="594"/>
        <end position="611"/>
    </location>
</feature>
<feature type="modified residue" description="N6-acetyllysine" evidence="9">
    <location>
        <position position="318"/>
    </location>
</feature>
<feature type="modified residue" description="3'-nitrotyrosine" evidence="1">
    <location>
        <position position="574"/>
    </location>
</feature>
<feature type="splice variant" id="VSP_000163" description="In isoform B, isoform C and isoform 4." evidence="5 6 7">
    <location>
        <begin position="667"/>
        <end position="673"/>
    </location>
</feature>
<feature type="splice variant" id="VSP_044928" description="In isoform 4." evidence="6">
    <location>
        <begin position="722"/>
        <end position="741"/>
    </location>
</feature>
<feature type="splice variant" id="VSP_038753" description="In isoform C and isoform 4." evidence="5 6">
    <location>
        <begin position="923"/>
        <end position="925"/>
    </location>
</feature>
<feature type="sequence variant" id="VAR_083524" description="In KIDAR; dbSNP:rs1602749299." evidence="3">
    <original>C</original>
    <variation>R</variation>
    <location>
        <position position="144"/>
    </location>
</feature>
<feature type="sequence variant" id="VAR_062816" description="In dbSNP:rs2857465.">
    <original>A</original>
    <variation>T</variation>
    <location>
        <position position="777"/>
    </location>
</feature>
<feature type="sequence variant" id="VAR_083525" description="In KIDAR; no protein detected by Western blot in patient cells." evidence="3">
    <location>
        <begin position="792"/>
        <end position="949"/>
    </location>
</feature>
<feature type="helix" evidence="11">
    <location>
        <begin position="16"/>
        <end position="22"/>
    </location>
</feature>
<feature type="helix" evidence="11">
    <location>
        <begin position="27"/>
        <end position="42"/>
    </location>
</feature>
<feature type="helix" evidence="11">
    <location>
        <begin position="48"/>
        <end position="50"/>
    </location>
</feature>
<feature type="helix" evidence="11">
    <location>
        <begin position="51"/>
        <end position="55"/>
    </location>
</feature>
<feature type="helix" evidence="11">
    <location>
        <begin position="63"/>
        <end position="75"/>
    </location>
</feature>
<feature type="strand" evidence="11">
    <location>
        <begin position="76"/>
        <end position="80"/>
    </location>
</feature>
<feature type="turn" evidence="11">
    <location>
        <begin position="81"/>
        <end position="87"/>
    </location>
</feature>
<feature type="helix" evidence="11">
    <location>
        <begin position="88"/>
        <end position="93"/>
    </location>
</feature>
<feature type="strand" evidence="11">
    <location>
        <begin position="94"/>
        <end position="98"/>
    </location>
</feature>
<feature type="helix" evidence="11">
    <location>
        <begin position="100"/>
        <end position="111"/>
    </location>
</feature>
<feature type="turn" evidence="11">
    <location>
        <begin position="117"/>
        <end position="122"/>
    </location>
</feature>
<feature type="helix" evidence="11">
    <location>
        <begin position="123"/>
        <end position="129"/>
    </location>
</feature>
<feature type="helix" evidence="11">
    <location>
        <begin position="135"/>
        <end position="151"/>
    </location>
</feature>
<feature type="helix" evidence="11">
    <location>
        <begin position="153"/>
        <end position="159"/>
    </location>
</feature>
<feature type="helix" evidence="11">
    <location>
        <begin position="161"/>
        <end position="167"/>
    </location>
</feature>
<feature type="strand" evidence="11">
    <location>
        <begin position="170"/>
        <end position="173"/>
    </location>
</feature>
<feature type="helix" evidence="11">
    <location>
        <begin position="174"/>
        <end position="190"/>
    </location>
</feature>
<feature type="strand" evidence="10">
    <location>
        <begin position="191"/>
        <end position="193"/>
    </location>
</feature>
<feature type="helix" evidence="11">
    <location>
        <begin position="201"/>
        <end position="211"/>
    </location>
</feature>
<feature type="helix" evidence="11">
    <location>
        <begin position="216"/>
        <end position="226"/>
    </location>
</feature>
<feature type="helix" evidence="11">
    <location>
        <begin position="234"/>
        <end position="244"/>
    </location>
</feature>
<feature type="helix" evidence="11">
    <location>
        <begin position="245"/>
        <end position="249"/>
    </location>
</feature>
<feature type="helix" evidence="11">
    <location>
        <begin position="253"/>
        <end position="266"/>
    </location>
</feature>
<feature type="turn" evidence="11">
    <location>
        <begin position="267"/>
        <end position="269"/>
    </location>
</feature>
<feature type="strand" evidence="11">
    <location>
        <begin position="272"/>
        <end position="274"/>
    </location>
</feature>
<feature type="helix" evidence="11">
    <location>
        <begin position="276"/>
        <end position="290"/>
    </location>
</feature>
<feature type="helix" evidence="11">
    <location>
        <begin position="291"/>
        <end position="293"/>
    </location>
</feature>
<feature type="helix" evidence="11">
    <location>
        <begin position="296"/>
        <end position="312"/>
    </location>
</feature>
<feature type="strand" evidence="11">
    <location>
        <begin position="316"/>
        <end position="319"/>
    </location>
</feature>
<feature type="helix" evidence="11">
    <location>
        <begin position="322"/>
        <end position="324"/>
    </location>
</feature>
<feature type="helix" evidence="11">
    <location>
        <begin position="332"/>
        <end position="344"/>
    </location>
</feature>
<feature type="turn" evidence="11">
    <location>
        <begin position="348"/>
        <end position="350"/>
    </location>
</feature>
<feature type="helix" evidence="11">
    <location>
        <begin position="351"/>
        <end position="361"/>
    </location>
</feature>
<feature type="helix" evidence="11">
    <location>
        <begin position="367"/>
        <end position="383"/>
    </location>
</feature>
<feature type="helix" evidence="11">
    <location>
        <begin position="385"/>
        <end position="387"/>
    </location>
</feature>
<feature type="helix" evidence="11">
    <location>
        <begin position="388"/>
        <end position="399"/>
    </location>
</feature>
<feature type="helix" evidence="11">
    <location>
        <begin position="404"/>
        <end position="420"/>
    </location>
</feature>
<feature type="helix" evidence="11">
    <location>
        <begin position="429"/>
        <end position="432"/>
    </location>
</feature>
<feature type="strand" evidence="11">
    <location>
        <begin position="433"/>
        <end position="435"/>
    </location>
</feature>
<feature type="helix" evidence="11">
    <location>
        <begin position="442"/>
        <end position="454"/>
    </location>
</feature>
<feature type="turn" evidence="11">
    <location>
        <begin position="455"/>
        <end position="457"/>
    </location>
</feature>
<feature type="helix" evidence="11">
    <location>
        <begin position="462"/>
        <end position="466"/>
    </location>
</feature>
<feature type="helix" evidence="11">
    <location>
        <begin position="470"/>
        <end position="475"/>
    </location>
</feature>
<feature type="helix" evidence="11">
    <location>
        <begin position="479"/>
        <end position="494"/>
    </location>
</feature>
<feature type="helix" evidence="11">
    <location>
        <begin position="500"/>
        <end position="511"/>
    </location>
</feature>
<feature type="helix" evidence="11">
    <location>
        <begin position="517"/>
        <end position="532"/>
    </location>
</feature>
<feature type="helix" evidence="11">
    <location>
        <begin position="534"/>
        <end position="541"/>
    </location>
</feature>
<feature type="helix" evidence="11">
    <location>
        <begin position="557"/>
        <end position="564"/>
    </location>
</feature>
<feature type="turn" evidence="10">
    <location>
        <begin position="565"/>
        <end position="568"/>
    </location>
</feature>
<feature type="helix" evidence="11">
    <location>
        <begin position="570"/>
        <end position="574"/>
    </location>
</feature>
<feature type="helix" evidence="11">
    <location>
        <begin position="578"/>
        <end position="580"/>
    </location>
</feature>
<evidence type="ECO:0000250" key="1">
    <source>
        <dbReference type="UniProtKB" id="O35643"/>
    </source>
</evidence>
<evidence type="ECO:0000256" key="2">
    <source>
        <dbReference type="SAM" id="MobiDB-lite"/>
    </source>
</evidence>
<evidence type="ECO:0000269" key="3">
    <source>
    </source>
</evidence>
<evidence type="ECO:0000269" key="4">
    <source>
    </source>
</evidence>
<evidence type="ECO:0000303" key="5">
    <source>
    </source>
</evidence>
<evidence type="ECO:0000303" key="6">
    <source>
    </source>
</evidence>
<evidence type="ECO:0000303" key="7">
    <source>
    </source>
</evidence>
<evidence type="ECO:0000305" key="8"/>
<evidence type="ECO:0007744" key="9">
    <source>
    </source>
</evidence>
<evidence type="ECO:0007829" key="10">
    <source>
        <dbReference type="PDB" id="4P6Z"/>
    </source>
</evidence>
<evidence type="ECO:0007829" key="11">
    <source>
        <dbReference type="PDB" id="7R4H"/>
    </source>
</evidence>